<sequence>MISSANNKGAGTSRRKLRSEKAALQFSVSRVEYSLKKGRYCRRLGATAPVYLAAVLENLVAEVLDMAANVTEETSPIVIKPRHIMLAPRNDVEVEQAVSRCHHLGIRCRP</sequence>
<feature type="chain" id="PRO_0000240653" description="Histone H2A.1">
    <location>
        <begin position="1"/>
        <end position="110"/>
    </location>
</feature>
<keyword id="KW-0158">Chromosome</keyword>
<keyword id="KW-0238">DNA-binding</keyword>
<keyword id="KW-0544">Nucleosome core</keyword>
<keyword id="KW-0539">Nucleus</keyword>
<reference key="1">
    <citation type="journal article" date="1999" name="Plant Mol. Biol.">
        <title>Male gametic cell-specific expression of H2A and H3 histone genes.</title>
        <authorList>
            <person name="Xu H."/>
            <person name="Swoboda I."/>
            <person name="Bhalla P.L."/>
            <person name="Singh M.B."/>
        </authorList>
    </citation>
    <scope>NUCLEOTIDE SEQUENCE [MRNA]</scope>
    <scope>TISSUE SPECIFICITY</scope>
    <scope>DEVELOPMENTAL STAGE</scope>
</reference>
<proteinExistence type="evidence at transcript level"/>
<comment type="function">
    <text>Core component of nucleosome. Nucleosomes wrap and compact DNA into chromatin, limiting DNA accessibility to the cellular machineries which require DNA as a template. Histones thereby play a central role in transcription regulation, DNA repair, DNA replication and chromosomal stability. DNA accessibility is regulated via a complex set of post-translational modifications of histones, also called histone code, and nucleosome remodeling.</text>
</comment>
<comment type="subunit">
    <text>The nucleosome is a histone octamer containing two molecules each of H2A, H2B, H3 and H4 assembled in one H3-H4 heterotetramer and two H2A-H2B heterodimers. The octamer wraps approximately 147 bp of DNA.</text>
</comment>
<comment type="subcellular location">
    <subcellularLocation>
        <location evidence="1">Nucleus</location>
    </subcellularLocation>
    <subcellularLocation>
        <location evidence="1">Chromosome</location>
    </subcellularLocation>
</comment>
<comment type="tissue specificity">
    <text evidence="2">Expressed in the generative cell within the bicellular pollen. Not detected in other reproductive or vegetative tissues.</text>
</comment>
<comment type="developmental stage">
    <text evidence="2">Associated with the differentiation of male gametic cells during pollen maturation.</text>
</comment>
<comment type="similarity">
    <text evidence="3">Belongs to the histone H2A family.</text>
</comment>
<evidence type="ECO:0000250" key="1"/>
<evidence type="ECO:0000269" key="2">
    <source>
    </source>
</evidence>
<evidence type="ECO:0000305" key="3"/>
<gene>
    <name type="primary">gcH2A</name>
</gene>
<accession>Q9XG56</accession>
<name>H2A1_LILLO</name>
<dbReference type="EMBL" id="AJ010974">
    <property type="protein sequence ID" value="CAB40356.1"/>
    <property type="molecule type" value="mRNA"/>
</dbReference>
<dbReference type="SMR" id="Q9XG56"/>
<dbReference type="GO" id="GO:0000786">
    <property type="term" value="C:nucleosome"/>
    <property type="evidence" value="ECO:0007669"/>
    <property type="project" value="UniProtKB-KW"/>
</dbReference>
<dbReference type="GO" id="GO:0005634">
    <property type="term" value="C:nucleus"/>
    <property type="evidence" value="ECO:0007669"/>
    <property type="project" value="UniProtKB-SubCell"/>
</dbReference>
<dbReference type="GO" id="GO:0003677">
    <property type="term" value="F:DNA binding"/>
    <property type="evidence" value="ECO:0007669"/>
    <property type="project" value="UniProtKB-KW"/>
</dbReference>
<dbReference type="GO" id="GO:0046982">
    <property type="term" value="F:protein heterodimerization activity"/>
    <property type="evidence" value="ECO:0007669"/>
    <property type="project" value="InterPro"/>
</dbReference>
<dbReference type="GO" id="GO:0030527">
    <property type="term" value="F:structural constituent of chromatin"/>
    <property type="evidence" value="ECO:0007669"/>
    <property type="project" value="InterPro"/>
</dbReference>
<dbReference type="CDD" id="cd00074">
    <property type="entry name" value="HFD_H2A"/>
    <property type="match status" value="1"/>
</dbReference>
<dbReference type="Gene3D" id="1.10.20.10">
    <property type="entry name" value="Histone, subunit A"/>
    <property type="match status" value="1"/>
</dbReference>
<dbReference type="InterPro" id="IPR009072">
    <property type="entry name" value="Histone-fold"/>
</dbReference>
<dbReference type="InterPro" id="IPR002119">
    <property type="entry name" value="Histone_H2A"/>
</dbReference>
<dbReference type="PANTHER" id="PTHR23430">
    <property type="entry name" value="HISTONE H2A"/>
    <property type="match status" value="1"/>
</dbReference>
<dbReference type="PRINTS" id="PR00620">
    <property type="entry name" value="HISTONEH2A"/>
</dbReference>
<dbReference type="SMART" id="SM00414">
    <property type="entry name" value="H2A"/>
    <property type="match status" value="1"/>
</dbReference>
<dbReference type="SUPFAM" id="SSF47113">
    <property type="entry name" value="Histone-fold"/>
    <property type="match status" value="1"/>
</dbReference>
<organism>
    <name type="scientific">Lilium longiflorum</name>
    <name type="common">Trumpet lily</name>
    <dbReference type="NCBI Taxonomy" id="4690"/>
    <lineage>
        <taxon>Eukaryota</taxon>
        <taxon>Viridiplantae</taxon>
        <taxon>Streptophyta</taxon>
        <taxon>Embryophyta</taxon>
        <taxon>Tracheophyta</taxon>
        <taxon>Spermatophyta</taxon>
        <taxon>Magnoliopsida</taxon>
        <taxon>Liliopsida</taxon>
        <taxon>Liliales</taxon>
        <taxon>Liliaceae</taxon>
        <taxon>Lilium</taxon>
    </lineage>
</organism>
<protein>
    <recommendedName>
        <fullName>Histone H2A.1</fullName>
    </recommendedName>
    <alternativeName>
        <fullName>GcH2A</fullName>
    </alternativeName>
</protein>